<gene>
    <name evidence="1" type="primary">lspA</name>
    <name type="ordered locus">BAbS19_I01400</name>
</gene>
<reference key="1">
    <citation type="journal article" date="2008" name="PLoS ONE">
        <title>Genome sequence of Brucella abortus vaccine strain S19 compared to virulent strains yields candidate virulence genes.</title>
        <authorList>
            <person name="Crasta O.R."/>
            <person name="Folkerts O."/>
            <person name="Fei Z."/>
            <person name="Mane S.P."/>
            <person name="Evans C."/>
            <person name="Martino-Catt S."/>
            <person name="Bricker B."/>
            <person name="Yu G."/>
            <person name="Du L."/>
            <person name="Sobral B.W."/>
        </authorList>
    </citation>
    <scope>NUCLEOTIDE SEQUENCE [LARGE SCALE GENOMIC DNA]</scope>
    <source>
        <strain>S19</strain>
    </source>
</reference>
<dbReference type="EC" id="3.4.23.36" evidence="1"/>
<dbReference type="EMBL" id="CP000887">
    <property type="protein sequence ID" value="ACD71696.1"/>
    <property type="molecule type" value="Genomic_DNA"/>
</dbReference>
<dbReference type="RefSeq" id="WP_002965397.1">
    <property type="nucleotide sequence ID" value="NC_010742.1"/>
</dbReference>
<dbReference type="SMR" id="B2S8E3"/>
<dbReference type="GeneID" id="97534439"/>
<dbReference type="KEGG" id="bmc:BAbS19_I01400"/>
<dbReference type="HOGENOM" id="CLU_083252_4_3_5"/>
<dbReference type="UniPathway" id="UPA00665"/>
<dbReference type="Proteomes" id="UP000002565">
    <property type="component" value="Chromosome 1"/>
</dbReference>
<dbReference type="GO" id="GO:0005886">
    <property type="term" value="C:plasma membrane"/>
    <property type="evidence" value="ECO:0007669"/>
    <property type="project" value="UniProtKB-SubCell"/>
</dbReference>
<dbReference type="GO" id="GO:0004190">
    <property type="term" value="F:aspartic-type endopeptidase activity"/>
    <property type="evidence" value="ECO:0007669"/>
    <property type="project" value="UniProtKB-UniRule"/>
</dbReference>
<dbReference type="GO" id="GO:0006508">
    <property type="term" value="P:proteolysis"/>
    <property type="evidence" value="ECO:0007669"/>
    <property type="project" value="UniProtKB-KW"/>
</dbReference>
<dbReference type="HAMAP" id="MF_00161">
    <property type="entry name" value="LspA"/>
    <property type="match status" value="1"/>
</dbReference>
<dbReference type="InterPro" id="IPR001872">
    <property type="entry name" value="Peptidase_A8"/>
</dbReference>
<dbReference type="NCBIfam" id="TIGR00077">
    <property type="entry name" value="lspA"/>
    <property type="match status" value="1"/>
</dbReference>
<dbReference type="PANTHER" id="PTHR33695">
    <property type="entry name" value="LIPOPROTEIN SIGNAL PEPTIDASE"/>
    <property type="match status" value="1"/>
</dbReference>
<dbReference type="PANTHER" id="PTHR33695:SF1">
    <property type="entry name" value="LIPOPROTEIN SIGNAL PEPTIDASE"/>
    <property type="match status" value="1"/>
</dbReference>
<dbReference type="Pfam" id="PF01252">
    <property type="entry name" value="Peptidase_A8"/>
    <property type="match status" value="1"/>
</dbReference>
<dbReference type="PRINTS" id="PR00781">
    <property type="entry name" value="LIPOSIGPTASE"/>
</dbReference>
<dbReference type="PROSITE" id="PS00855">
    <property type="entry name" value="SPASE_II"/>
    <property type="match status" value="1"/>
</dbReference>
<comment type="function">
    <text evidence="1">This protein specifically catalyzes the removal of signal peptides from prolipoproteins.</text>
</comment>
<comment type="catalytic activity">
    <reaction evidence="1">
        <text>Release of signal peptides from bacterial membrane prolipoproteins. Hydrolyzes -Xaa-Yaa-Zaa-|-(S,diacylglyceryl)Cys-, in which Xaa is hydrophobic (preferably Leu), and Yaa (Ala or Ser) and Zaa (Gly or Ala) have small, neutral side chains.</text>
        <dbReference type="EC" id="3.4.23.36"/>
    </reaction>
</comment>
<comment type="pathway">
    <text evidence="1">Protein modification; lipoprotein biosynthesis (signal peptide cleavage).</text>
</comment>
<comment type="subcellular location">
    <subcellularLocation>
        <location evidence="1">Cell inner membrane</location>
        <topology evidence="1">Multi-pass membrane protein</topology>
    </subcellularLocation>
</comment>
<comment type="similarity">
    <text evidence="1">Belongs to the peptidase A8 family.</text>
</comment>
<proteinExistence type="inferred from homology"/>
<protein>
    <recommendedName>
        <fullName evidence="1">Lipoprotein signal peptidase</fullName>
        <ecNumber evidence="1">3.4.23.36</ecNumber>
    </recommendedName>
    <alternativeName>
        <fullName evidence="1">Prolipoprotein signal peptidase</fullName>
    </alternativeName>
    <alternativeName>
        <fullName evidence="1">Signal peptidase II</fullName>
        <shortName evidence="1">SPase II</shortName>
    </alternativeName>
</protein>
<name>LSPA_BRUA1</name>
<keyword id="KW-0064">Aspartyl protease</keyword>
<keyword id="KW-0997">Cell inner membrane</keyword>
<keyword id="KW-1003">Cell membrane</keyword>
<keyword id="KW-0378">Hydrolase</keyword>
<keyword id="KW-0472">Membrane</keyword>
<keyword id="KW-0645">Protease</keyword>
<keyword id="KW-0812">Transmembrane</keyword>
<keyword id="KW-1133">Transmembrane helix</keyword>
<evidence type="ECO:0000255" key="1">
    <source>
        <dbReference type="HAMAP-Rule" id="MF_00161"/>
    </source>
</evidence>
<sequence>MKRHAVWSSLFVVILAVLIDQGIKYLVESRMFYGQQIDLLPFLALFRTHNEGIAFSMLAWLHDGGLIAITLAVIAFVLYLWWTNAPERVFARYGFALVIGGAIGNLIDRVMHGYVVDYVLFHLPTWSFAVFNLADAFITIGAGLIILEEFLGWRRERISH</sequence>
<organism>
    <name type="scientific">Brucella abortus (strain S19)</name>
    <dbReference type="NCBI Taxonomy" id="430066"/>
    <lineage>
        <taxon>Bacteria</taxon>
        <taxon>Pseudomonadati</taxon>
        <taxon>Pseudomonadota</taxon>
        <taxon>Alphaproteobacteria</taxon>
        <taxon>Hyphomicrobiales</taxon>
        <taxon>Brucellaceae</taxon>
        <taxon>Brucella/Ochrobactrum group</taxon>
        <taxon>Brucella</taxon>
    </lineage>
</organism>
<accession>B2S8E3</accession>
<feature type="chain" id="PRO_1000097234" description="Lipoprotein signal peptidase">
    <location>
        <begin position="1"/>
        <end position="160"/>
    </location>
</feature>
<feature type="transmembrane region" description="Helical" evidence="1">
    <location>
        <begin position="6"/>
        <end position="26"/>
    </location>
</feature>
<feature type="transmembrane region" description="Helical" evidence="1">
    <location>
        <begin position="58"/>
        <end position="78"/>
    </location>
</feature>
<feature type="transmembrane region" description="Helical" evidence="1">
    <location>
        <begin position="95"/>
        <end position="115"/>
    </location>
</feature>
<feature type="transmembrane region" description="Helical" evidence="1">
    <location>
        <begin position="127"/>
        <end position="147"/>
    </location>
</feature>
<feature type="active site" evidence="1">
    <location>
        <position position="117"/>
    </location>
</feature>
<feature type="active site" evidence="1">
    <location>
        <position position="135"/>
    </location>
</feature>